<accession>C0RM54</accession>
<proteinExistence type="inferred from homology"/>
<protein>
    <recommendedName>
        <fullName evidence="1">UPF0309 protein BMEA_B0892</fullName>
    </recommendedName>
</protein>
<name>Y3192_BRUMB</name>
<sequence>MTEITDRYFNDVIARLSGLRDRLAAQMEKAADLIAAAARADRRVYVFGTGHSHMMAEELHYRAGGLAITVPILCGSIMLQDGAVASSHFERIEGAVRPILDRYGIRDGDVLVVVSNSGVNAAPIEAARYAREKGAAIIALTSVAYSNTIARGRTQLLSLADVVLDNDAPSGDAVLEIAGSALKVGPVSTALGVTILNAVFADVAARLVGEGDAPIYLSANMPGSGDINRSLVERYRDRNPHL</sequence>
<dbReference type="EMBL" id="CP001489">
    <property type="protein sequence ID" value="ACO02687.1"/>
    <property type="molecule type" value="Genomic_DNA"/>
</dbReference>
<dbReference type="RefSeq" id="WP_004682301.1">
    <property type="nucleotide sequence ID" value="NC_012442.1"/>
</dbReference>
<dbReference type="SMR" id="C0RM54"/>
<dbReference type="KEGG" id="bmi:BMEA_B0892"/>
<dbReference type="HOGENOM" id="CLU_089975_0_0_5"/>
<dbReference type="Proteomes" id="UP000001748">
    <property type="component" value="Chromosome II"/>
</dbReference>
<dbReference type="GO" id="GO:0097367">
    <property type="term" value="F:carbohydrate derivative binding"/>
    <property type="evidence" value="ECO:0007669"/>
    <property type="project" value="InterPro"/>
</dbReference>
<dbReference type="GO" id="GO:1901135">
    <property type="term" value="P:carbohydrate derivative metabolic process"/>
    <property type="evidence" value="ECO:0007669"/>
    <property type="project" value="InterPro"/>
</dbReference>
<dbReference type="CDD" id="cd05013">
    <property type="entry name" value="SIS_RpiR"/>
    <property type="match status" value="1"/>
</dbReference>
<dbReference type="Gene3D" id="3.40.50.10490">
    <property type="entry name" value="Glucose-6-phosphate isomerase like protein, domain 1"/>
    <property type="match status" value="1"/>
</dbReference>
<dbReference type="HAMAP" id="MF_01240">
    <property type="entry name" value="UPF0309"/>
    <property type="match status" value="1"/>
</dbReference>
<dbReference type="InterPro" id="IPR035472">
    <property type="entry name" value="RpiR-like_SIS"/>
</dbReference>
<dbReference type="InterPro" id="IPR001347">
    <property type="entry name" value="SIS_dom"/>
</dbReference>
<dbReference type="InterPro" id="IPR046348">
    <property type="entry name" value="SIS_dom_sf"/>
</dbReference>
<dbReference type="InterPro" id="IPR050099">
    <property type="entry name" value="SIS_GmhA/DiaA_subfam"/>
</dbReference>
<dbReference type="InterPro" id="IPR022951">
    <property type="entry name" value="UPF0309"/>
</dbReference>
<dbReference type="NCBIfam" id="NF002805">
    <property type="entry name" value="PRK02947.1"/>
    <property type="match status" value="1"/>
</dbReference>
<dbReference type="PANTHER" id="PTHR30390:SF7">
    <property type="entry name" value="PHOSPHOHEPTOSE ISOMERASE"/>
    <property type="match status" value="1"/>
</dbReference>
<dbReference type="PANTHER" id="PTHR30390">
    <property type="entry name" value="SEDOHEPTULOSE 7-PHOSPHATE ISOMERASE / DNAA INITIATOR-ASSOCIATING FACTOR FOR REPLICATION INITIATION"/>
    <property type="match status" value="1"/>
</dbReference>
<dbReference type="Pfam" id="PF13580">
    <property type="entry name" value="SIS_2"/>
    <property type="match status" value="1"/>
</dbReference>
<dbReference type="SUPFAM" id="SSF53697">
    <property type="entry name" value="SIS domain"/>
    <property type="match status" value="1"/>
</dbReference>
<dbReference type="PROSITE" id="PS51464">
    <property type="entry name" value="SIS"/>
    <property type="match status" value="1"/>
</dbReference>
<comment type="similarity">
    <text evidence="1">Belongs to the UPF0309 family.</text>
</comment>
<organism>
    <name type="scientific">Brucella melitensis biotype 2 (strain ATCC 23457)</name>
    <dbReference type="NCBI Taxonomy" id="546272"/>
    <lineage>
        <taxon>Bacteria</taxon>
        <taxon>Pseudomonadati</taxon>
        <taxon>Pseudomonadota</taxon>
        <taxon>Alphaproteobacteria</taxon>
        <taxon>Hyphomicrobiales</taxon>
        <taxon>Brucellaceae</taxon>
        <taxon>Brucella/Ochrobactrum group</taxon>
        <taxon>Brucella</taxon>
    </lineage>
</organism>
<gene>
    <name type="ordered locus">BMEA_B0892</name>
</gene>
<feature type="chain" id="PRO_1000165007" description="UPF0309 protein BMEA_B0892">
    <location>
        <begin position="1"/>
        <end position="242"/>
    </location>
</feature>
<feature type="domain" description="SIS" evidence="1">
    <location>
        <begin position="30"/>
        <end position="214"/>
    </location>
</feature>
<reference key="1">
    <citation type="submission" date="2009-03" db="EMBL/GenBank/DDBJ databases">
        <title>Brucella melitensis ATCC 23457 whole genome shotgun sequencing project.</title>
        <authorList>
            <person name="Setubal J.C."/>
            <person name="Boyle S."/>
            <person name="Crasta O.R."/>
            <person name="Gillespie J.J."/>
            <person name="Kenyon R.W."/>
            <person name="Lu J."/>
            <person name="Mane S."/>
            <person name="Nagrani S."/>
            <person name="Shallom J.M."/>
            <person name="Shallom S."/>
            <person name="Shukla M."/>
            <person name="Snyder E.E."/>
            <person name="Sobral B.W."/>
            <person name="Wattam A.R."/>
            <person name="Will R."/>
            <person name="Williams K."/>
            <person name="Yoo H."/>
            <person name="Munk C."/>
            <person name="Tapia R."/>
            <person name="Han C."/>
            <person name="Detter J.C."/>
            <person name="Bruce D."/>
            <person name="Brettin T.S."/>
        </authorList>
    </citation>
    <scope>NUCLEOTIDE SEQUENCE [LARGE SCALE GENOMIC DNA]</scope>
    <source>
        <strain>ATCC 23457</strain>
    </source>
</reference>
<evidence type="ECO:0000255" key="1">
    <source>
        <dbReference type="HAMAP-Rule" id="MF_01240"/>
    </source>
</evidence>